<protein>
    <recommendedName>
        <fullName>Elastin-binding protein EbpS</fullName>
    </recommendedName>
</protein>
<reference key="1">
    <citation type="journal article" date="2007" name="PLoS ONE">
        <title>Molecular correlates of host specialization in Staphylococcus aureus.</title>
        <authorList>
            <person name="Herron-Olson L."/>
            <person name="Fitzgerald J.R."/>
            <person name="Musser J.M."/>
            <person name="Kapur V."/>
        </authorList>
    </citation>
    <scope>NUCLEOTIDE SEQUENCE [LARGE SCALE GENOMIC DNA]</scope>
    <source>
        <strain>bovine RF122 / ET3-1</strain>
    </source>
</reference>
<proteinExistence type="inferred from homology"/>
<dbReference type="EMBL" id="AJ938182">
    <property type="protein sequence ID" value="CAI81032.1"/>
    <property type="molecule type" value="Genomic_DNA"/>
</dbReference>
<dbReference type="RefSeq" id="WP_000069313.1">
    <property type="nucleotide sequence ID" value="NC_007622.1"/>
</dbReference>
<dbReference type="SMR" id="Q2YY76"/>
<dbReference type="KEGG" id="sab:SAB1343c"/>
<dbReference type="HOGENOM" id="CLU_043950_0_0_9"/>
<dbReference type="PRO" id="PR:Q2YY76"/>
<dbReference type="GO" id="GO:0005886">
    <property type="term" value="C:plasma membrane"/>
    <property type="evidence" value="ECO:0007669"/>
    <property type="project" value="UniProtKB-SubCell"/>
</dbReference>
<dbReference type="CDD" id="cd00118">
    <property type="entry name" value="LysM"/>
    <property type="match status" value="1"/>
</dbReference>
<dbReference type="Gene3D" id="3.10.350.10">
    <property type="entry name" value="LysM domain"/>
    <property type="match status" value="1"/>
</dbReference>
<dbReference type="InterPro" id="IPR018392">
    <property type="entry name" value="LysM_dom"/>
</dbReference>
<dbReference type="InterPro" id="IPR036779">
    <property type="entry name" value="LysM_dom_sf"/>
</dbReference>
<dbReference type="NCBIfam" id="NF033598">
    <property type="entry name" value="elast_bind_EbpS"/>
    <property type="match status" value="1"/>
</dbReference>
<dbReference type="Pfam" id="PF01476">
    <property type="entry name" value="LysM"/>
    <property type="match status" value="1"/>
</dbReference>
<dbReference type="SMART" id="SM00257">
    <property type="entry name" value="LysM"/>
    <property type="match status" value="1"/>
</dbReference>
<dbReference type="SUPFAM" id="SSF54106">
    <property type="entry name" value="LysM domain"/>
    <property type="match status" value="1"/>
</dbReference>
<dbReference type="PROSITE" id="PS51782">
    <property type="entry name" value="LYSM"/>
    <property type="match status" value="1"/>
</dbReference>
<feature type="initiator methionine" description="Removed" evidence="1">
    <location>
        <position position="1"/>
    </location>
</feature>
<feature type="chain" id="PRO_0000271732" description="Elastin-binding protein EbpS">
    <location>
        <begin position="2"/>
        <end position="483"/>
    </location>
</feature>
<feature type="transmembrane region" description="Helical" evidence="2">
    <location>
        <begin position="317"/>
        <end position="337"/>
    </location>
</feature>
<feature type="domain" description="LysM" evidence="3">
    <location>
        <begin position="434"/>
        <end position="482"/>
    </location>
</feature>
<feature type="region of interest" description="Disordered" evidence="4">
    <location>
        <begin position="1"/>
        <end position="311"/>
    </location>
</feature>
<feature type="region of interest" description="Elastin-binding" evidence="1">
    <location>
        <begin position="14"/>
        <end position="34"/>
    </location>
</feature>
<feature type="region of interest" description="Disordered" evidence="4">
    <location>
        <begin position="348"/>
        <end position="437"/>
    </location>
</feature>
<feature type="compositionally biased region" description="Basic and acidic residues" evidence="4">
    <location>
        <begin position="1"/>
        <end position="40"/>
    </location>
</feature>
<feature type="compositionally biased region" description="Polar residues" evidence="4">
    <location>
        <begin position="64"/>
        <end position="85"/>
    </location>
</feature>
<feature type="compositionally biased region" description="Basic and acidic residues" evidence="4">
    <location>
        <begin position="103"/>
        <end position="118"/>
    </location>
</feature>
<feature type="compositionally biased region" description="Basic and acidic residues" evidence="4">
    <location>
        <begin position="126"/>
        <end position="160"/>
    </location>
</feature>
<feature type="compositionally biased region" description="Basic and acidic residues" evidence="4">
    <location>
        <begin position="180"/>
        <end position="199"/>
    </location>
</feature>
<feature type="compositionally biased region" description="Low complexity" evidence="4">
    <location>
        <begin position="204"/>
        <end position="222"/>
    </location>
</feature>
<feature type="compositionally biased region" description="Polar residues" evidence="4">
    <location>
        <begin position="230"/>
        <end position="243"/>
    </location>
</feature>
<feature type="compositionally biased region" description="Basic and acidic residues" evidence="4">
    <location>
        <begin position="244"/>
        <end position="256"/>
    </location>
</feature>
<feature type="compositionally biased region" description="Low complexity" evidence="4">
    <location>
        <begin position="275"/>
        <end position="294"/>
    </location>
</feature>
<feature type="compositionally biased region" description="Basic and acidic residues" evidence="4">
    <location>
        <begin position="296"/>
        <end position="311"/>
    </location>
</feature>
<feature type="compositionally biased region" description="Basic and acidic residues" evidence="4">
    <location>
        <begin position="358"/>
        <end position="395"/>
    </location>
</feature>
<feature type="compositionally biased region" description="Low complexity" evidence="4">
    <location>
        <begin position="400"/>
        <end position="428"/>
    </location>
</feature>
<evidence type="ECO:0000250" key="1"/>
<evidence type="ECO:0000255" key="2"/>
<evidence type="ECO:0000255" key="3">
    <source>
        <dbReference type="PROSITE-ProRule" id="PRU01118"/>
    </source>
</evidence>
<evidence type="ECO:0000256" key="4">
    <source>
        <dbReference type="SAM" id="MobiDB-lite"/>
    </source>
</evidence>
<evidence type="ECO:0000305" key="5"/>
<organism>
    <name type="scientific">Staphylococcus aureus (strain bovine RF122 / ET3-1)</name>
    <dbReference type="NCBI Taxonomy" id="273036"/>
    <lineage>
        <taxon>Bacteria</taxon>
        <taxon>Bacillati</taxon>
        <taxon>Bacillota</taxon>
        <taxon>Bacilli</taxon>
        <taxon>Bacillales</taxon>
        <taxon>Staphylococcaceae</taxon>
        <taxon>Staphylococcus</taxon>
    </lineage>
</organism>
<comment type="function">
    <text evidence="1">Promotes binding of soluble elastin peptides and tropoelastin to S.aureus cells although it is not able to promote bacterial adherence to immobilized elastin and, therefore, is not a microbial surface component recognizing adhesive matrix molecule (MSCRAMM).</text>
</comment>
<comment type="subcellular location">
    <subcellularLocation>
        <location evidence="5">Cell membrane</location>
        <topology evidence="5">Single-pass membrane protein</topology>
    </subcellularLocation>
</comment>
<comment type="domain">
    <text evidence="1">The elastin-binding domain is located between residues 13-33 at the surface-exposed N-terminus, whereas the C-terminus, containing the LysM peptidoglycan-binding domain, is not exposed on the surface of intact cells and presumably remains buried within the peptidoglycan. The presence of the TNSHQD sequence, corresponding to residues 18-23, is essential for EbpS activity but not sufficient, additional flanking amino acids in the amino- or carboxy-terminal are required for elastin recognition (By similarity).</text>
</comment>
<accession>Q2YY76</accession>
<keyword id="KW-1003">Cell membrane</keyword>
<keyword id="KW-0472">Membrane</keyword>
<keyword id="KW-0812">Transmembrane</keyword>
<keyword id="KW-1133">Transmembrane helix</keyword>
<gene>
    <name type="primary">ebpS</name>
    <name type="ordered locus">SAB1343c</name>
</gene>
<sequence>MSNNFKDDFEKNRQSIDTNSHQDHTEEVEKDQSELEHQDTIENTEQQFPPRNAQRRKRRRDLATNHNKQVHNESQTSEDNVQNEAGTIDDHQVESSHSTESQEPSHQDSTPQHEEEYYNKNAFAMDKSHPEPIEDNDKHETVKDAENNTEHSTVSDKSEAEQSQQPKPYFATGANQANTSKDKHDDVTVKQYKDESKDHHSGKKGAAIGAGTAGVAGAMAASKAKKHSNDAQNKSNSGKANNSTEDKASQDKSKEHHNGKKGAAIGAGTAGLAGGAASKSASAASKPHASNNASQNHDEHDHHDRDKERKKGGMAKVLLPLIAAVLIIGALAIFGGMALNNHNNGTKENKIANTNKNNADESKDKDTSKDASKDKSKSTDSDKSKEDQDKATKDESDNDQNNANQANNQAQNNQNQQQANQNQQQQQQRQGGGQRHTVNGQENLYRIAIQYYGSGSPENVEKIRRANGLSGNNIRNGQQIVIP</sequence>
<name>EBPS_STAAB</name>